<reference key="1">
    <citation type="journal article" date="2006" name="J. Bacteriol.">
        <title>Chromosome rearrangement and diversification of Francisella tularensis revealed by the type B (OSU18) genome sequence.</title>
        <authorList>
            <person name="Petrosino J.F."/>
            <person name="Xiang Q."/>
            <person name="Karpathy S.E."/>
            <person name="Jiang H."/>
            <person name="Yerrapragada S."/>
            <person name="Liu Y."/>
            <person name="Gioia J."/>
            <person name="Hemphill L."/>
            <person name="Gonzalez A."/>
            <person name="Raghavan T.M."/>
            <person name="Uzman A."/>
            <person name="Fox G.E."/>
            <person name="Highlander S."/>
            <person name="Reichard M."/>
            <person name="Morton R.J."/>
            <person name="Clinkenbeard K.D."/>
            <person name="Weinstock G.M."/>
        </authorList>
    </citation>
    <scope>NUCLEOTIDE SEQUENCE [LARGE SCALE GENOMIC DNA]</scope>
    <source>
        <strain>OSU18</strain>
    </source>
</reference>
<sequence>MAKEDCIEMEGVVLEALPNTMFRVELENGRIVTAHISGKMRKNYIRILTGDKVVVEITPYDLTKGRIKFRSK</sequence>
<dbReference type="EMBL" id="CP000437">
    <property type="protein sequence ID" value="ABI83072.1"/>
    <property type="molecule type" value="Genomic_DNA"/>
</dbReference>
<dbReference type="RefSeq" id="WP_003016350.1">
    <property type="nucleotide sequence ID" value="NC_017463.1"/>
</dbReference>
<dbReference type="SMR" id="Q0BLG2"/>
<dbReference type="KEGG" id="fth:FTH_1213"/>
<dbReference type="GO" id="GO:0005829">
    <property type="term" value="C:cytosol"/>
    <property type="evidence" value="ECO:0007669"/>
    <property type="project" value="TreeGrafter"/>
</dbReference>
<dbReference type="GO" id="GO:0043022">
    <property type="term" value="F:ribosome binding"/>
    <property type="evidence" value="ECO:0007669"/>
    <property type="project" value="UniProtKB-UniRule"/>
</dbReference>
<dbReference type="GO" id="GO:0019843">
    <property type="term" value="F:rRNA binding"/>
    <property type="evidence" value="ECO:0007669"/>
    <property type="project" value="UniProtKB-UniRule"/>
</dbReference>
<dbReference type="GO" id="GO:0003743">
    <property type="term" value="F:translation initiation factor activity"/>
    <property type="evidence" value="ECO:0007669"/>
    <property type="project" value="UniProtKB-UniRule"/>
</dbReference>
<dbReference type="CDD" id="cd04451">
    <property type="entry name" value="S1_IF1"/>
    <property type="match status" value="1"/>
</dbReference>
<dbReference type="FunFam" id="2.40.50.140:FF:000002">
    <property type="entry name" value="Translation initiation factor IF-1"/>
    <property type="match status" value="1"/>
</dbReference>
<dbReference type="Gene3D" id="2.40.50.140">
    <property type="entry name" value="Nucleic acid-binding proteins"/>
    <property type="match status" value="1"/>
</dbReference>
<dbReference type="HAMAP" id="MF_00075">
    <property type="entry name" value="IF_1"/>
    <property type="match status" value="1"/>
</dbReference>
<dbReference type="InterPro" id="IPR012340">
    <property type="entry name" value="NA-bd_OB-fold"/>
</dbReference>
<dbReference type="InterPro" id="IPR006196">
    <property type="entry name" value="RNA-binding_domain_S1_IF1"/>
</dbReference>
<dbReference type="InterPro" id="IPR003029">
    <property type="entry name" value="S1_domain"/>
</dbReference>
<dbReference type="InterPro" id="IPR004368">
    <property type="entry name" value="TIF_IF1"/>
</dbReference>
<dbReference type="NCBIfam" id="TIGR00008">
    <property type="entry name" value="infA"/>
    <property type="match status" value="1"/>
</dbReference>
<dbReference type="PANTHER" id="PTHR33370">
    <property type="entry name" value="TRANSLATION INITIATION FACTOR IF-1, CHLOROPLASTIC"/>
    <property type="match status" value="1"/>
</dbReference>
<dbReference type="PANTHER" id="PTHR33370:SF1">
    <property type="entry name" value="TRANSLATION INITIATION FACTOR IF-1, CHLOROPLASTIC"/>
    <property type="match status" value="1"/>
</dbReference>
<dbReference type="Pfam" id="PF01176">
    <property type="entry name" value="eIF-1a"/>
    <property type="match status" value="1"/>
</dbReference>
<dbReference type="SMART" id="SM00316">
    <property type="entry name" value="S1"/>
    <property type="match status" value="1"/>
</dbReference>
<dbReference type="SUPFAM" id="SSF50249">
    <property type="entry name" value="Nucleic acid-binding proteins"/>
    <property type="match status" value="1"/>
</dbReference>
<dbReference type="PROSITE" id="PS50832">
    <property type="entry name" value="S1_IF1_TYPE"/>
    <property type="match status" value="1"/>
</dbReference>
<organism>
    <name type="scientific">Francisella tularensis subsp. holarctica (strain OSU18)</name>
    <dbReference type="NCBI Taxonomy" id="393011"/>
    <lineage>
        <taxon>Bacteria</taxon>
        <taxon>Pseudomonadati</taxon>
        <taxon>Pseudomonadota</taxon>
        <taxon>Gammaproteobacteria</taxon>
        <taxon>Thiotrichales</taxon>
        <taxon>Francisellaceae</taxon>
        <taxon>Francisella</taxon>
    </lineage>
</organism>
<name>IF1_FRATO</name>
<gene>
    <name evidence="1" type="primary">infA</name>
    <name type="ordered locus">FTH_1213</name>
</gene>
<protein>
    <recommendedName>
        <fullName evidence="1">Translation initiation factor IF-1</fullName>
    </recommendedName>
</protein>
<evidence type="ECO:0000255" key="1">
    <source>
        <dbReference type="HAMAP-Rule" id="MF_00075"/>
    </source>
</evidence>
<accession>Q0BLG2</accession>
<keyword id="KW-0963">Cytoplasm</keyword>
<keyword id="KW-0396">Initiation factor</keyword>
<keyword id="KW-0648">Protein biosynthesis</keyword>
<keyword id="KW-0694">RNA-binding</keyword>
<keyword id="KW-0699">rRNA-binding</keyword>
<feature type="chain" id="PRO_0000263802" description="Translation initiation factor IF-1">
    <location>
        <begin position="1"/>
        <end position="72"/>
    </location>
</feature>
<feature type="domain" description="S1-like" evidence="1">
    <location>
        <begin position="1"/>
        <end position="72"/>
    </location>
</feature>
<comment type="function">
    <text evidence="1">One of the essential components for the initiation of protein synthesis. Stabilizes the binding of IF-2 and IF-3 on the 30S subunit to which N-formylmethionyl-tRNA(fMet) subsequently binds. Helps modulate mRNA selection, yielding the 30S pre-initiation complex (PIC). Upon addition of the 50S ribosomal subunit IF-1, IF-2 and IF-3 are released leaving the mature 70S translation initiation complex.</text>
</comment>
<comment type="subunit">
    <text evidence="1">Component of the 30S ribosomal translation pre-initiation complex which assembles on the 30S ribosome in the order IF-2 and IF-3, IF-1 and N-formylmethionyl-tRNA(fMet); mRNA recruitment can occur at any time during PIC assembly.</text>
</comment>
<comment type="subcellular location">
    <subcellularLocation>
        <location evidence="1">Cytoplasm</location>
    </subcellularLocation>
</comment>
<comment type="similarity">
    <text evidence="1">Belongs to the IF-1 family.</text>
</comment>
<proteinExistence type="inferred from homology"/>